<protein>
    <recommendedName>
        <fullName>Uncharacterized 18.6 kDa protein in P143-LEF5 intergenic region</fullName>
    </recommendedName>
</protein>
<organismHost>
    <name type="scientific">Tortricidae</name>
    <dbReference type="NCBI Taxonomy" id="7139"/>
</organismHost>
<feature type="chain" id="PRO_0000133029" description="Uncharacterized 18.6 kDa protein in P143-LEF5 intergenic region">
    <location>
        <begin position="1"/>
        <end position="162"/>
    </location>
</feature>
<accession>P41728</accession>
<evidence type="ECO:0000305" key="1"/>
<reference key="1">
    <citation type="journal article" date="1994" name="J. Gen. Virol.">
        <title>Genome organization of the DNA-binding protein gene region of Cryptophlebia leucotreta granulosis virus is closely related to that of nuclear polyhedrosis viruses.</title>
        <authorList>
            <person name="Jehle J.A."/>
            <person name="Backhaus H."/>
        </authorList>
    </citation>
    <scope>NUCLEOTIDE SEQUENCE [GENOMIC DNA]</scope>
</reference>
<reference key="2">
    <citation type="journal article" date="2003" name="Virology">
        <title>The genome of the Cryptophlebia leucotreta granulovirus.</title>
        <authorList>
            <person name="Lange M."/>
            <person name="Jehle J.A."/>
        </authorList>
    </citation>
    <scope>NUCLEOTIDE SEQUENCE [LARGE SCALE GENOMIC DNA]</scope>
    <source>
        <strain>CV3</strain>
    </source>
</reference>
<comment type="similarity">
    <text evidence="1">Belongs to the baculoviridae 19 kDa protein family.</text>
</comment>
<comment type="caution">
    <text evidence="1">It is uncertain whether Met-1 is the initiator.</text>
</comment>
<sequence>MSSTDMAVLLLVIALIFLIVNTLDNPLIMIGTRLIESTRVKVGPFIHVLERDGDRLFVIEPEQTLLYNTAGLIYYYFEGGASRRFCPVGEQAIVRIGLTDIGLINENGIYNVSCTNTSSWDLYEHFKNDSFEWKLPTFYEKTSIIDIINELIRYGYVRIGYQ</sequence>
<keyword id="KW-1185">Reference proteome</keyword>
<organism>
    <name type="scientific">Cryptophlebia leucotreta granulosis virus</name>
    <name type="common">ClGV</name>
    <name type="synonym">Cryptophlebia leucotreta granulovirus</name>
    <dbReference type="NCBI Taxonomy" id="35254"/>
    <lineage>
        <taxon>Viruses</taxon>
        <taxon>Viruses incertae sedis</taxon>
        <taxon>Naldaviricetes</taxon>
        <taxon>Lefavirales</taxon>
        <taxon>Baculoviridae</taxon>
        <taxon>Betabaculovirus</taxon>
        <taxon>Betabaculovirus cryleucotretae</taxon>
    </lineage>
</organism>
<name>Y096_GVCL</name>
<proteinExistence type="inferred from homology"/>
<dbReference type="EMBL" id="AY229987">
    <property type="protein sequence ID" value="AAQ21675.1"/>
    <property type="molecule type" value="Genomic_DNA"/>
</dbReference>
<dbReference type="RefSeq" id="NP_891927.1">
    <property type="nucleotide sequence ID" value="NC_005068.1"/>
</dbReference>
<dbReference type="SMR" id="P41728"/>
<dbReference type="GeneID" id="1725096"/>
<dbReference type="KEGG" id="vg:1725096"/>
<dbReference type="OrthoDB" id="16714at10239"/>
<dbReference type="Proteomes" id="UP000203359">
    <property type="component" value="Genome"/>
</dbReference>
<dbReference type="InterPro" id="IPR006883">
    <property type="entry name" value="AcMNPV_PIF-4"/>
</dbReference>
<dbReference type="Pfam" id="PF04798">
    <property type="entry name" value="Baculo_19"/>
    <property type="match status" value="1"/>
</dbReference>